<feature type="chain" id="PRO_0000126175" description="Large ribosomal subunit protein bL36">
    <location>
        <begin position="1"/>
        <end position="37"/>
    </location>
</feature>
<name>RL36_CLOAB</name>
<keyword id="KW-1185">Reference proteome</keyword>
<keyword id="KW-0687">Ribonucleoprotein</keyword>
<keyword id="KW-0689">Ribosomal protein</keyword>
<sequence length="37" mass="4277">MKVRPSVKPICEKCKVIKRKGKVMVICENPKHKQKQG</sequence>
<evidence type="ECO:0000255" key="1">
    <source>
        <dbReference type="HAMAP-Rule" id="MF_00251"/>
    </source>
</evidence>
<evidence type="ECO:0000305" key="2"/>
<dbReference type="EMBL" id="AE001437">
    <property type="protein sequence ID" value="AAK81048.1"/>
    <property type="molecule type" value="Genomic_DNA"/>
</dbReference>
<dbReference type="PIR" id="E97282">
    <property type="entry name" value="E97282"/>
</dbReference>
<dbReference type="RefSeq" id="NP_349708.1">
    <property type="nucleotide sequence ID" value="NC_003030.1"/>
</dbReference>
<dbReference type="RefSeq" id="WP_002509257.1">
    <property type="nucleotide sequence ID" value="NC_003030.1"/>
</dbReference>
<dbReference type="SMR" id="Q97EK2"/>
<dbReference type="STRING" id="272562.CA_C3108"/>
<dbReference type="GeneID" id="98001104"/>
<dbReference type="KEGG" id="cac:CA_C3108"/>
<dbReference type="PATRIC" id="fig|272562.8.peg.3291"/>
<dbReference type="eggNOG" id="COG0257">
    <property type="taxonomic scope" value="Bacteria"/>
</dbReference>
<dbReference type="HOGENOM" id="CLU_135723_6_2_9"/>
<dbReference type="OrthoDB" id="9802520at2"/>
<dbReference type="Proteomes" id="UP000000814">
    <property type="component" value="Chromosome"/>
</dbReference>
<dbReference type="GO" id="GO:0005737">
    <property type="term" value="C:cytoplasm"/>
    <property type="evidence" value="ECO:0007669"/>
    <property type="project" value="UniProtKB-ARBA"/>
</dbReference>
<dbReference type="GO" id="GO:1990904">
    <property type="term" value="C:ribonucleoprotein complex"/>
    <property type="evidence" value="ECO:0007669"/>
    <property type="project" value="UniProtKB-KW"/>
</dbReference>
<dbReference type="GO" id="GO:0005840">
    <property type="term" value="C:ribosome"/>
    <property type="evidence" value="ECO:0007669"/>
    <property type="project" value="UniProtKB-KW"/>
</dbReference>
<dbReference type="GO" id="GO:0003735">
    <property type="term" value="F:structural constituent of ribosome"/>
    <property type="evidence" value="ECO:0007669"/>
    <property type="project" value="InterPro"/>
</dbReference>
<dbReference type="GO" id="GO:0006412">
    <property type="term" value="P:translation"/>
    <property type="evidence" value="ECO:0007669"/>
    <property type="project" value="UniProtKB-UniRule"/>
</dbReference>
<dbReference type="HAMAP" id="MF_00251">
    <property type="entry name" value="Ribosomal_bL36"/>
    <property type="match status" value="1"/>
</dbReference>
<dbReference type="InterPro" id="IPR000473">
    <property type="entry name" value="Ribosomal_bL36"/>
</dbReference>
<dbReference type="InterPro" id="IPR035977">
    <property type="entry name" value="Ribosomal_bL36_sp"/>
</dbReference>
<dbReference type="NCBIfam" id="TIGR01022">
    <property type="entry name" value="rpmJ_bact"/>
    <property type="match status" value="1"/>
</dbReference>
<dbReference type="PANTHER" id="PTHR42888">
    <property type="entry name" value="50S RIBOSOMAL PROTEIN L36, CHLOROPLASTIC"/>
    <property type="match status" value="1"/>
</dbReference>
<dbReference type="PANTHER" id="PTHR42888:SF1">
    <property type="entry name" value="LARGE RIBOSOMAL SUBUNIT PROTEIN BL36C"/>
    <property type="match status" value="1"/>
</dbReference>
<dbReference type="Pfam" id="PF00444">
    <property type="entry name" value="Ribosomal_L36"/>
    <property type="match status" value="1"/>
</dbReference>
<dbReference type="SUPFAM" id="SSF57840">
    <property type="entry name" value="Ribosomal protein L36"/>
    <property type="match status" value="1"/>
</dbReference>
<dbReference type="PROSITE" id="PS00828">
    <property type="entry name" value="RIBOSOMAL_L36"/>
    <property type="match status" value="1"/>
</dbReference>
<gene>
    <name evidence="1" type="primary">rpmJ</name>
    <name type="ordered locus">CA_C3108</name>
</gene>
<organism>
    <name type="scientific">Clostridium acetobutylicum (strain ATCC 824 / DSM 792 / JCM 1419 / IAM 19013 / LMG 5710 / NBRC 13948 / NRRL B-527 / VKM B-1787 / 2291 / W)</name>
    <dbReference type="NCBI Taxonomy" id="272562"/>
    <lineage>
        <taxon>Bacteria</taxon>
        <taxon>Bacillati</taxon>
        <taxon>Bacillota</taxon>
        <taxon>Clostridia</taxon>
        <taxon>Eubacteriales</taxon>
        <taxon>Clostridiaceae</taxon>
        <taxon>Clostridium</taxon>
    </lineage>
</organism>
<protein>
    <recommendedName>
        <fullName evidence="1">Large ribosomal subunit protein bL36</fullName>
    </recommendedName>
    <alternativeName>
        <fullName evidence="2">50S ribosomal protein L36</fullName>
    </alternativeName>
</protein>
<proteinExistence type="inferred from homology"/>
<reference key="1">
    <citation type="journal article" date="2001" name="J. Bacteriol.">
        <title>Genome sequence and comparative analysis of the solvent-producing bacterium Clostridium acetobutylicum.</title>
        <authorList>
            <person name="Noelling J."/>
            <person name="Breton G."/>
            <person name="Omelchenko M.V."/>
            <person name="Makarova K.S."/>
            <person name="Zeng Q."/>
            <person name="Gibson R."/>
            <person name="Lee H.M."/>
            <person name="Dubois J."/>
            <person name="Qiu D."/>
            <person name="Hitti J."/>
            <person name="Wolf Y.I."/>
            <person name="Tatusov R.L."/>
            <person name="Sabathe F."/>
            <person name="Doucette-Stamm L.A."/>
            <person name="Soucaille P."/>
            <person name="Daly M.J."/>
            <person name="Bennett G.N."/>
            <person name="Koonin E.V."/>
            <person name="Smith D.R."/>
        </authorList>
    </citation>
    <scope>NUCLEOTIDE SEQUENCE [LARGE SCALE GENOMIC DNA]</scope>
    <source>
        <strain>ATCC 824 / DSM 792 / JCM 1419 / IAM 19013 / LMG 5710 / NBRC 13948 / NRRL B-527 / VKM B-1787 / 2291 / W</strain>
    </source>
</reference>
<accession>Q97EK2</accession>
<comment type="similarity">
    <text evidence="1">Belongs to the bacterial ribosomal protein bL36 family.</text>
</comment>